<evidence type="ECO:0000255" key="1">
    <source>
        <dbReference type="HAMAP-Rule" id="MF_01384"/>
    </source>
</evidence>
<feature type="chain" id="PRO_0000346602" description="Urease accessory protein UreD">
    <location>
        <begin position="1"/>
        <end position="278"/>
    </location>
</feature>
<sequence length="278" mass="32437">MDEQQWTGQLDLTVFFDGNRSVSRDIFFEKALKVIRPVYLNQSTIPTFYIVNVGGGYLDGDRYRMNVNVEDNAKVTLTSQGATKIYKTPSNHVEQYQTFNLKDNAYLEYVADPIIAYENAKFYQHNTFNLNNSSSLFYTDILTPGYSKTGEAFKYQYMHLINEIYIEDELVTYDNLLLNPNKQSINEIGYMEHYSHYGSAYFIHEDVNQKLIDSVYETISSYSNTFDCRVAISQLPTHGFAVRIFAYRTQIIEKILGTIQSYIAENIYDRKLDFLRKY</sequence>
<proteinExistence type="inferred from homology"/>
<name>URED_STAAT</name>
<reference key="1">
    <citation type="journal article" date="2007" name="BMC Microbiol.">
        <title>Subtle genetic changes enhance virulence of methicillin resistant and sensitive Staphylococcus aureus.</title>
        <authorList>
            <person name="Highlander S.K."/>
            <person name="Hulten K.G."/>
            <person name="Qin X."/>
            <person name="Jiang H."/>
            <person name="Yerrapragada S."/>
            <person name="Mason E.O. Jr."/>
            <person name="Shang Y."/>
            <person name="Williams T.M."/>
            <person name="Fortunov R.M."/>
            <person name="Liu Y."/>
            <person name="Igboeli O."/>
            <person name="Petrosino J."/>
            <person name="Tirumalai M."/>
            <person name="Uzman A."/>
            <person name="Fox G.E."/>
            <person name="Cardenas A.M."/>
            <person name="Muzny D.M."/>
            <person name="Hemphill L."/>
            <person name="Ding Y."/>
            <person name="Dugan S."/>
            <person name="Blyth P.R."/>
            <person name="Buhay C.J."/>
            <person name="Dinh H.H."/>
            <person name="Hawes A.C."/>
            <person name="Holder M."/>
            <person name="Kovar C.L."/>
            <person name="Lee S.L."/>
            <person name="Liu W."/>
            <person name="Nazareth L.V."/>
            <person name="Wang Q."/>
            <person name="Zhou J."/>
            <person name="Kaplan S.L."/>
            <person name="Weinstock G.M."/>
        </authorList>
    </citation>
    <scope>NUCLEOTIDE SEQUENCE [LARGE SCALE GENOMIC DNA]</scope>
    <source>
        <strain>USA300 / TCH1516</strain>
    </source>
</reference>
<keyword id="KW-0143">Chaperone</keyword>
<keyword id="KW-0963">Cytoplasm</keyword>
<keyword id="KW-0996">Nickel insertion</keyword>
<accession>A8Z391</accession>
<organism>
    <name type="scientific">Staphylococcus aureus (strain USA300 / TCH1516)</name>
    <dbReference type="NCBI Taxonomy" id="451516"/>
    <lineage>
        <taxon>Bacteria</taxon>
        <taxon>Bacillati</taxon>
        <taxon>Bacillota</taxon>
        <taxon>Bacilli</taxon>
        <taxon>Bacillales</taxon>
        <taxon>Staphylococcaceae</taxon>
        <taxon>Staphylococcus</taxon>
    </lineage>
</organism>
<dbReference type="EMBL" id="CP000730">
    <property type="protein sequence ID" value="ABX30268.1"/>
    <property type="molecule type" value="Genomic_DNA"/>
</dbReference>
<dbReference type="RefSeq" id="WP_000344352.1">
    <property type="nucleotide sequence ID" value="NC_010079.1"/>
</dbReference>
<dbReference type="SMR" id="A8Z391"/>
<dbReference type="KEGG" id="sax:USA300HOU_2275"/>
<dbReference type="HOGENOM" id="CLU_056339_5_0_9"/>
<dbReference type="GO" id="GO:0005737">
    <property type="term" value="C:cytoplasm"/>
    <property type="evidence" value="ECO:0007669"/>
    <property type="project" value="UniProtKB-SubCell"/>
</dbReference>
<dbReference type="GO" id="GO:0016151">
    <property type="term" value="F:nickel cation binding"/>
    <property type="evidence" value="ECO:0007669"/>
    <property type="project" value="UniProtKB-UniRule"/>
</dbReference>
<dbReference type="HAMAP" id="MF_01384">
    <property type="entry name" value="UreD"/>
    <property type="match status" value="1"/>
</dbReference>
<dbReference type="InterPro" id="IPR002669">
    <property type="entry name" value="UreD"/>
</dbReference>
<dbReference type="PANTHER" id="PTHR33643">
    <property type="entry name" value="UREASE ACCESSORY PROTEIN D"/>
    <property type="match status" value="1"/>
</dbReference>
<dbReference type="PANTHER" id="PTHR33643:SF1">
    <property type="entry name" value="UREASE ACCESSORY PROTEIN D"/>
    <property type="match status" value="1"/>
</dbReference>
<dbReference type="Pfam" id="PF01774">
    <property type="entry name" value="UreD"/>
    <property type="match status" value="1"/>
</dbReference>
<comment type="function">
    <text evidence="1">Required for maturation of urease via the functional incorporation of the urease nickel metallocenter.</text>
</comment>
<comment type="subunit">
    <text evidence="1">UreD, UreF and UreG form a complex that acts as a GTP-hydrolysis-dependent molecular chaperone, activating the urease apoprotein by helping to assemble the nickel containing metallocenter of UreC. The UreE protein probably delivers the nickel.</text>
</comment>
<comment type="subcellular location">
    <subcellularLocation>
        <location evidence="1">Cytoplasm</location>
    </subcellularLocation>
</comment>
<comment type="similarity">
    <text evidence="1">Belongs to the UreD family.</text>
</comment>
<gene>
    <name evidence="1" type="primary">ureD</name>
    <name type="ordered locus">USA300HOU_2275</name>
</gene>
<protein>
    <recommendedName>
        <fullName evidence="1">Urease accessory protein UreD</fullName>
    </recommendedName>
</protein>